<gene>
    <name evidence="1" type="primary">kup</name>
    <name type="ordered locus">AZC_4041</name>
</gene>
<keyword id="KW-0997">Cell inner membrane</keyword>
<keyword id="KW-1003">Cell membrane</keyword>
<keyword id="KW-0406">Ion transport</keyword>
<keyword id="KW-0472">Membrane</keyword>
<keyword id="KW-0630">Potassium</keyword>
<keyword id="KW-0633">Potassium transport</keyword>
<keyword id="KW-1185">Reference proteome</keyword>
<keyword id="KW-0769">Symport</keyword>
<keyword id="KW-0812">Transmembrane</keyword>
<keyword id="KW-1133">Transmembrane helix</keyword>
<keyword id="KW-0813">Transport</keyword>
<dbReference type="EMBL" id="AP009384">
    <property type="protein sequence ID" value="BAF90039.2"/>
    <property type="molecule type" value="Genomic_DNA"/>
</dbReference>
<dbReference type="RefSeq" id="WP_173362981.1">
    <property type="nucleotide sequence ID" value="NC_009937.1"/>
</dbReference>
<dbReference type="SMR" id="A8ILJ2"/>
<dbReference type="STRING" id="438753.AZC_4041"/>
<dbReference type="KEGG" id="azc:AZC_4041"/>
<dbReference type="eggNOG" id="COG3158">
    <property type="taxonomic scope" value="Bacteria"/>
</dbReference>
<dbReference type="HOGENOM" id="CLU_008142_4_2_5"/>
<dbReference type="Proteomes" id="UP000000270">
    <property type="component" value="Chromosome"/>
</dbReference>
<dbReference type="GO" id="GO:0005886">
    <property type="term" value="C:plasma membrane"/>
    <property type="evidence" value="ECO:0007669"/>
    <property type="project" value="UniProtKB-SubCell"/>
</dbReference>
<dbReference type="GO" id="GO:0015079">
    <property type="term" value="F:potassium ion transmembrane transporter activity"/>
    <property type="evidence" value="ECO:0007669"/>
    <property type="project" value="UniProtKB-UniRule"/>
</dbReference>
<dbReference type="GO" id="GO:0015293">
    <property type="term" value="F:symporter activity"/>
    <property type="evidence" value="ECO:0007669"/>
    <property type="project" value="UniProtKB-UniRule"/>
</dbReference>
<dbReference type="HAMAP" id="MF_01522">
    <property type="entry name" value="Kup"/>
    <property type="match status" value="1"/>
</dbReference>
<dbReference type="InterPro" id="IPR003855">
    <property type="entry name" value="K+_transporter"/>
</dbReference>
<dbReference type="InterPro" id="IPR053952">
    <property type="entry name" value="K_trans_C"/>
</dbReference>
<dbReference type="InterPro" id="IPR053951">
    <property type="entry name" value="K_trans_N"/>
</dbReference>
<dbReference type="InterPro" id="IPR023051">
    <property type="entry name" value="Kup"/>
</dbReference>
<dbReference type="PANTHER" id="PTHR30540:SF79">
    <property type="entry name" value="LOW AFFINITY POTASSIUM TRANSPORT SYSTEM PROTEIN KUP"/>
    <property type="match status" value="1"/>
</dbReference>
<dbReference type="PANTHER" id="PTHR30540">
    <property type="entry name" value="OSMOTIC STRESS POTASSIUM TRANSPORTER"/>
    <property type="match status" value="1"/>
</dbReference>
<dbReference type="Pfam" id="PF02705">
    <property type="entry name" value="K_trans"/>
    <property type="match status" value="1"/>
</dbReference>
<dbReference type="Pfam" id="PF22776">
    <property type="entry name" value="K_trans_C"/>
    <property type="match status" value="1"/>
</dbReference>
<reference key="1">
    <citation type="submission" date="2007-04" db="EMBL/GenBank/DDBJ databases">
        <title>Complete genome sequence of the nitrogen-fixing bacterium Azorhizobium caulinodans ORS571.</title>
        <authorList>
            <person name="Lee K.B."/>
            <person name="Backer P.D."/>
            <person name="Aono T."/>
            <person name="Liu C.T."/>
            <person name="Suzuki S."/>
            <person name="Suzuki T."/>
            <person name="Kaneko T."/>
            <person name="Yamada M."/>
            <person name="Tabata S."/>
            <person name="Kupfer D.M."/>
            <person name="Najar F.Z."/>
            <person name="Wiley G.B."/>
            <person name="Roe B."/>
            <person name="Binnewies T."/>
            <person name="Ussery D."/>
            <person name="Vereecke D."/>
            <person name="Gevers D."/>
            <person name="Holsters M."/>
            <person name="Oyaizu H."/>
        </authorList>
    </citation>
    <scope>NUCLEOTIDE SEQUENCE [LARGE SCALE GENOMIC DNA]</scope>
    <source>
        <strain>ATCC 43989 / DSM 5975 / JCM 20966 / LMG 6465 / NBRC 14845 / NCIMB 13405 / ORS 571</strain>
    </source>
</reference>
<sequence>MALSFSRDRSRALPLAAEIGALGVVFGDIGTSPLYALKQGVLAVGGTDFTSADVMGLLSLITWSIILSVTVKYVMLVLRADNDGEGGILALVTLLDLHRSAIGLRWYLLAAGLVGAAMLIGDGVLTPAMSVLSAIEGLQVISPALLDWIVPLTVLVLAAVFLSQRLGTERIASFYGPIMVLWFGSLAVLGVYGIMQAPEVLAGLDPRAGFHTVTTHPGLAGVIIGACFLAITGGEALYADLGHFGRKTIARAWLFVAMPALLLNYFGQGAILLRDPQAVRNPFYDLCPDLFDIPLLFLATAATVIASQSIITGVFSLAKQAIELGYLPPMRIRYTSEHNEQHIYVGRLNWLLMVACIAVVLGFEASDRLASAYGIAVAFAMVTTSILFVAQVNRAWKWPKPAVIALGIGLFSLDAAFASANLTKLHEGGWLPLTIAGIVIFVMVSWRRGLEGVVAQQQRFTEPLDEFVLRGDRASDAESPRTAIFLSRAGAMTPVALSRMADLLKVRFQRAVIVSVWIAARPRVSVDDRVRVTNLDGGFIRVDLRFGYMQQIDVPSVLGPALSARGVDPDEAIYVIGHERIIPPDEVVRGRDVVAHVFAFLARNAERSVDRFGLPRSRTVEIGYPVKL</sequence>
<organism>
    <name type="scientific">Azorhizobium caulinodans (strain ATCC 43989 / DSM 5975 / JCM 20966 / LMG 6465 / NBRC 14845 / NCIMB 13405 / ORS 571)</name>
    <dbReference type="NCBI Taxonomy" id="438753"/>
    <lineage>
        <taxon>Bacteria</taxon>
        <taxon>Pseudomonadati</taxon>
        <taxon>Pseudomonadota</taxon>
        <taxon>Alphaproteobacteria</taxon>
        <taxon>Hyphomicrobiales</taxon>
        <taxon>Xanthobacteraceae</taxon>
        <taxon>Azorhizobium</taxon>
    </lineage>
</organism>
<proteinExistence type="inferred from homology"/>
<comment type="function">
    <text evidence="1">Transport of potassium into the cell. Likely operates as a K(+):H(+) symporter.</text>
</comment>
<comment type="catalytic activity">
    <reaction evidence="1">
        <text>K(+)(in) + H(+)(in) = K(+)(out) + H(+)(out)</text>
        <dbReference type="Rhea" id="RHEA:28490"/>
        <dbReference type="ChEBI" id="CHEBI:15378"/>
        <dbReference type="ChEBI" id="CHEBI:29103"/>
    </reaction>
    <physiologicalReaction direction="right-to-left" evidence="1">
        <dbReference type="Rhea" id="RHEA:28492"/>
    </physiologicalReaction>
</comment>
<comment type="subcellular location">
    <subcellularLocation>
        <location evidence="1">Cell inner membrane</location>
        <topology evidence="1">Multi-pass membrane protein</topology>
    </subcellularLocation>
</comment>
<comment type="similarity">
    <text evidence="1">Belongs to the HAK/KUP transporter (TC 2.A.72) family.</text>
</comment>
<feature type="chain" id="PRO_0000333306" description="Probable potassium transport system protein Kup">
    <location>
        <begin position="1"/>
        <end position="628"/>
    </location>
</feature>
<feature type="transmembrane region" description="Helical" evidence="1">
    <location>
        <begin position="12"/>
        <end position="32"/>
    </location>
</feature>
<feature type="transmembrane region" description="Helical" evidence="1">
    <location>
        <begin position="57"/>
        <end position="77"/>
    </location>
</feature>
<feature type="transmembrane region" description="Helical" evidence="1">
    <location>
        <begin position="106"/>
        <end position="126"/>
    </location>
</feature>
<feature type="transmembrane region" description="Helical" evidence="1">
    <location>
        <begin position="141"/>
        <end position="161"/>
    </location>
</feature>
<feature type="transmembrane region" description="Helical" evidence="1">
    <location>
        <begin position="174"/>
        <end position="194"/>
    </location>
</feature>
<feature type="transmembrane region" description="Helical" evidence="1">
    <location>
        <begin position="219"/>
        <end position="239"/>
    </location>
</feature>
<feature type="transmembrane region" description="Helical" evidence="1">
    <location>
        <begin position="253"/>
        <end position="273"/>
    </location>
</feature>
<feature type="transmembrane region" description="Helical" evidence="1">
    <location>
        <begin position="295"/>
        <end position="315"/>
    </location>
</feature>
<feature type="transmembrane region" description="Helical" evidence="1">
    <location>
        <begin position="343"/>
        <end position="363"/>
    </location>
</feature>
<feature type="transmembrane region" description="Helical" evidence="1">
    <location>
        <begin position="369"/>
        <end position="389"/>
    </location>
</feature>
<feature type="transmembrane region" description="Helical" evidence="1">
    <location>
        <begin position="402"/>
        <end position="422"/>
    </location>
</feature>
<feature type="transmembrane region" description="Helical" evidence="1">
    <location>
        <begin position="425"/>
        <end position="445"/>
    </location>
</feature>
<accession>A8ILJ2</accession>
<protein>
    <recommendedName>
        <fullName evidence="1">Probable potassium transport system protein Kup</fullName>
    </recommendedName>
</protein>
<evidence type="ECO:0000255" key="1">
    <source>
        <dbReference type="HAMAP-Rule" id="MF_01522"/>
    </source>
</evidence>
<name>KUP_AZOC5</name>